<comment type="catalytic activity">
    <reaction evidence="1">
        <text>5-amino-1-(5-phospho-D-ribosyl)imidazole-4-carboxylate + L-aspartate + ATP = (2S)-2-[5-amino-1-(5-phospho-beta-D-ribosyl)imidazole-4-carboxamido]succinate + ADP + phosphate + 2 H(+)</text>
        <dbReference type="Rhea" id="RHEA:22628"/>
        <dbReference type="ChEBI" id="CHEBI:15378"/>
        <dbReference type="ChEBI" id="CHEBI:29991"/>
        <dbReference type="ChEBI" id="CHEBI:30616"/>
        <dbReference type="ChEBI" id="CHEBI:43474"/>
        <dbReference type="ChEBI" id="CHEBI:58443"/>
        <dbReference type="ChEBI" id="CHEBI:77657"/>
        <dbReference type="ChEBI" id="CHEBI:456216"/>
        <dbReference type="EC" id="6.3.2.6"/>
    </reaction>
</comment>
<comment type="pathway">
    <text evidence="1">Purine metabolism; IMP biosynthesis via de novo pathway; 5-amino-1-(5-phospho-D-ribosyl)imidazole-4-carboxamide from 5-amino-1-(5-phospho-D-ribosyl)imidazole-4-carboxylate: step 1/2.</text>
</comment>
<comment type="similarity">
    <text evidence="1">Belongs to the SAICAR synthetase family.</text>
</comment>
<gene>
    <name evidence="1" type="primary">purC</name>
    <name type="ordered locus">A1I_03060</name>
</gene>
<name>PUR7_RICB8</name>
<evidence type="ECO:0000255" key="1">
    <source>
        <dbReference type="HAMAP-Rule" id="MF_00137"/>
    </source>
</evidence>
<reference key="1">
    <citation type="submission" date="2007-09" db="EMBL/GenBank/DDBJ databases">
        <title>Complete genome sequencing of Rickettsia bellii.</title>
        <authorList>
            <person name="Madan A."/>
            <person name="Lee H."/>
            <person name="Madan A."/>
            <person name="Yoon J.-G."/>
            <person name="Ryu G.-Y."/>
            <person name="Dasch G."/>
            <person name="Ereemeva M."/>
        </authorList>
    </citation>
    <scope>NUCLEOTIDE SEQUENCE [LARGE SCALE GENOMIC DNA]</scope>
    <source>
        <strain>OSU 85-389</strain>
    </source>
</reference>
<protein>
    <recommendedName>
        <fullName evidence="1">Phosphoribosylaminoimidazole-succinocarboxamide synthase</fullName>
        <ecNumber evidence="1">6.3.2.6</ecNumber>
    </recommendedName>
    <alternativeName>
        <fullName evidence="1">SAICAR synthetase</fullName>
    </alternativeName>
</protein>
<keyword id="KW-0067">ATP-binding</keyword>
<keyword id="KW-0436">Ligase</keyword>
<keyword id="KW-0547">Nucleotide-binding</keyword>
<keyword id="KW-0658">Purine biosynthesis</keyword>
<feature type="chain" id="PRO_1000018770" description="Phosphoribosylaminoimidazole-succinocarboxamide synthase">
    <location>
        <begin position="1"/>
        <end position="236"/>
    </location>
</feature>
<dbReference type="EC" id="6.3.2.6" evidence="1"/>
<dbReference type="EMBL" id="CP000849">
    <property type="protein sequence ID" value="ABV78977.1"/>
    <property type="molecule type" value="Genomic_DNA"/>
</dbReference>
<dbReference type="RefSeq" id="WP_011477206.1">
    <property type="nucleotide sequence ID" value="NC_009883.1"/>
</dbReference>
<dbReference type="SMR" id="A8GVV0"/>
<dbReference type="KEGG" id="rbo:A1I_03060"/>
<dbReference type="HOGENOM" id="CLU_061495_2_0_5"/>
<dbReference type="UniPathway" id="UPA00074">
    <property type="reaction ID" value="UER00131"/>
</dbReference>
<dbReference type="GO" id="GO:0005829">
    <property type="term" value="C:cytosol"/>
    <property type="evidence" value="ECO:0007669"/>
    <property type="project" value="TreeGrafter"/>
</dbReference>
<dbReference type="GO" id="GO:0005524">
    <property type="term" value="F:ATP binding"/>
    <property type="evidence" value="ECO:0007669"/>
    <property type="project" value="UniProtKB-KW"/>
</dbReference>
<dbReference type="GO" id="GO:0004639">
    <property type="term" value="F:phosphoribosylaminoimidazolesuccinocarboxamide synthase activity"/>
    <property type="evidence" value="ECO:0007669"/>
    <property type="project" value="UniProtKB-UniRule"/>
</dbReference>
<dbReference type="GO" id="GO:0006189">
    <property type="term" value="P:'de novo' IMP biosynthetic process"/>
    <property type="evidence" value="ECO:0007669"/>
    <property type="project" value="UniProtKB-UniRule"/>
</dbReference>
<dbReference type="GO" id="GO:0009236">
    <property type="term" value="P:cobalamin biosynthetic process"/>
    <property type="evidence" value="ECO:0007669"/>
    <property type="project" value="InterPro"/>
</dbReference>
<dbReference type="CDD" id="cd01415">
    <property type="entry name" value="SAICAR_synt_PurC"/>
    <property type="match status" value="1"/>
</dbReference>
<dbReference type="Gene3D" id="3.30.470.20">
    <property type="entry name" value="ATP-grasp fold, B domain"/>
    <property type="match status" value="1"/>
</dbReference>
<dbReference type="Gene3D" id="3.30.200.20">
    <property type="entry name" value="Phosphorylase Kinase, domain 1"/>
    <property type="match status" value="1"/>
</dbReference>
<dbReference type="HAMAP" id="MF_00137">
    <property type="entry name" value="SAICAR_synth"/>
    <property type="match status" value="1"/>
</dbReference>
<dbReference type="InterPro" id="IPR028923">
    <property type="entry name" value="SAICAR_synt/ADE2_N"/>
</dbReference>
<dbReference type="InterPro" id="IPR033934">
    <property type="entry name" value="SAICAR_synt_PurC"/>
</dbReference>
<dbReference type="InterPro" id="IPR050089">
    <property type="entry name" value="SAICAR_synthetase"/>
</dbReference>
<dbReference type="PANTHER" id="PTHR43599">
    <property type="entry name" value="MULTIFUNCTIONAL PROTEIN ADE2"/>
    <property type="match status" value="1"/>
</dbReference>
<dbReference type="PANTHER" id="PTHR43599:SF3">
    <property type="entry name" value="SI:DKEY-6E2.2"/>
    <property type="match status" value="1"/>
</dbReference>
<dbReference type="Pfam" id="PF01259">
    <property type="entry name" value="SAICAR_synt"/>
    <property type="match status" value="1"/>
</dbReference>
<dbReference type="SUPFAM" id="SSF56104">
    <property type="entry name" value="SAICAR synthase-like"/>
    <property type="match status" value="1"/>
</dbReference>
<sequence>MKKKLYEGSSKTLYSSEEEFLLVMAFSDKATLENGEIIDVSGKGVLNNNISSFVMNKLEMIGIENHFIEKLNMREQLIQYVEMFPLQVVVSSVACGRFVKEFGMDEGFVFDKPIIDFKVKSREFKYPIVNEHQILNFGWLTKDEINTVKKQALRIYDFLSGLFIGIGIRLVECNLEFGRVFTGEESLVMLTDEISPDTCKLWHINSNERLGFELLEKDPAKAYESYKLIADRLKEK</sequence>
<organism>
    <name type="scientific">Rickettsia bellii (strain OSU 85-389)</name>
    <dbReference type="NCBI Taxonomy" id="391896"/>
    <lineage>
        <taxon>Bacteria</taxon>
        <taxon>Pseudomonadati</taxon>
        <taxon>Pseudomonadota</taxon>
        <taxon>Alphaproteobacteria</taxon>
        <taxon>Rickettsiales</taxon>
        <taxon>Rickettsiaceae</taxon>
        <taxon>Rickettsieae</taxon>
        <taxon>Rickettsia</taxon>
        <taxon>belli group</taxon>
    </lineage>
</organism>
<proteinExistence type="inferred from homology"/>
<accession>A8GVV0</accession>